<sequence length="867" mass="98055">MIHLHSPPTAPAAFGGAGSADWRRRRRWSWSSSSRAPVAKGGHLRPCVWRRGGDDGGGEDHHADGGGGGGGGAAWRARATTAGVSSSSSTAKGLQANIIEHETPRITKWPNESRDLDDHQQNNEADEEADDELQPLVEQVRSMLSSMEDGAITASAYDTAWVALVPRLDGEGGTQFPAAVRWIVGSQLADGSWGDEALFSAYDRVINTLACVVALTRWSLHHDQCKQGLQFLNLNLWRLAEEEPDTMPIGFEIAFPSLVEAARGLGIDFPYDHPALKGIYANRELKLKRIPKDMMHIVPTSILHSLEGMPGLDWQRLLKLQCSDGSFLFSPSATAYALMQTGDKKCFAYIDRIIKKFDGGVPNVYPVDLFEHIWVVDRLERLGISRYFQREIEQNMDYVNRHWTEDGICWARNSNVKEVDDTAMAFRLLRLHGYNVSPSVFKNFEKDGEFFCFVGQSTQAVTGMYNLNRASQISFPGEDILQRARNFSYEFLREREAQGTLHDKWIISKDLPGEVQYTLDFPWYASLPRVEARTYIGQYGGNDDVWIGKTLYRMPIVNNATYLELAKQDFNRCQALHQHELQGLQKWFIENGLEAFGMTPEDVLRAYFLAAACIFEPNRASERLAWARVSVLANTISRHFYSDMSSMKRMERFMWSSLYEENGNVLGLEGYAKDGILARTLCQLIDLLSQETPPVREGQKCIHNLIRCAWIEWMMQQINMKDGRYDKGRVMHPGSCTVHNKETCLLIAQIVEICAGRIEEAASMINNTEGSWFIQLASSICDSLHAKMLLSQDTKKNETTINQIDKEIELGMQELAQYLLPRVDDRRINNKTKQTFLSIVKSCYYAANCSPHMLDQHISEVIFEQVI</sequence>
<comment type="function">
    <text evidence="5">Catalyzes the conversion of geranylgeranyl diphosphate to the gibberellin precursor ent-copalyl diphosphate.</text>
</comment>
<comment type="catalytic activity">
    <reaction>
        <text>(2E,6E,10E)-geranylgeranyl diphosphate = ent-copalyl diphosphate</text>
        <dbReference type="Rhea" id="RHEA:14841"/>
        <dbReference type="ChEBI" id="CHEBI:58553"/>
        <dbReference type="ChEBI" id="CHEBI:58756"/>
        <dbReference type="EC" id="5.5.1.13"/>
    </reaction>
</comment>
<comment type="cofactor">
    <cofactor evidence="6">
        <name>Mg(2+)</name>
        <dbReference type="ChEBI" id="CHEBI:18420"/>
    </cofactor>
</comment>
<comment type="pathway">
    <text>Plant hormone biosynthesis; gibberellin biosynthesis.</text>
</comment>
<comment type="subcellular location">
    <subcellularLocation>
        <location evidence="6">Plastid</location>
        <location evidence="6">Chloroplast</location>
    </subcellularLocation>
</comment>
<comment type="developmental stage">
    <text evidence="4">Expressed in developing pollen from 7 days before flowering.</text>
</comment>
<comment type="domain">
    <text>The Asp-Xaa-Asp-Asp (DXDD) motif is important for the catalytic activity, presumably through binding to Mg(2+).</text>
</comment>
<comment type="miscellaneous">
    <text>2 different ent-CDP synthases exist in rice, one being involved in gibberellin biosynthesis and the other in phytoalexins biosynthesis.</text>
</comment>
<comment type="similarity">
    <text evidence="6">Belongs to the terpene synthase family.</text>
</comment>
<dbReference type="EC" id="5.5.1.13"/>
<dbReference type="EMBL" id="AP004872">
    <property type="protein sequence ID" value="BAD28184.1"/>
    <property type="molecule type" value="Genomic_DNA"/>
</dbReference>
<dbReference type="EMBL" id="AP008208">
    <property type="protein sequence ID" value="BAF08464.1"/>
    <property type="molecule type" value="Genomic_DNA"/>
</dbReference>
<dbReference type="EMBL" id="AP014958">
    <property type="protein sequence ID" value="BAS78107.1"/>
    <property type="molecule type" value="Genomic_DNA"/>
</dbReference>
<dbReference type="EMBL" id="AB126932">
    <property type="protein sequence ID" value="BAD42449.2"/>
    <property type="molecule type" value="mRNA"/>
</dbReference>
<dbReference type="RefSeq" id="XP_015624005.1">
    <property type="nucleotide sequence ID" value="XM_015768519.1"/>
</dbReference>
<dbReference type="SMR" id="Q6ET36"/>
<dbReference type="FunCoup" id="Q6ET36">
    <property type="interactions" value="1822"/>
</dbReference>
<dbReference type="STRING" id="39947.Q6ET36"/>
<dbReference type="PaxDb" id="39947-Q6ET36"/>
<dbReference type="EnsemblPlants" id="Os02t0278700-01">
    <property type="protein sequence ID" value="Os02t0278700-01"/>
    <property type="gene ID" value="Os02g0278700"/>
</dbReference>
<dbReference type="Gramene" id="Os02t0278700-01">
    <property type="protein sequence ID" value="Os02t0278700-01"/>
    <property type="gene ID" value="Os02g0278700"/>
</dbReference>
<dbReference type="KEGG" id="dosa:Os02g0278700"/>
<dbReference type="eggNOG" id="ENOG502QQN6">
    <property type="taxonomic scope" value="Eukaryota"/>
</dbReference>
<dbReference type="HOGENOM" id="CLU_003125_3_2_1"/>
<dbReference type="InParanoid" id="Q6ET36"/>
<dbReference type="OMA" id="SMKRMER"/>
<dbReference type="OrthoDB" id="2343925at2759"/>
<dbReference type="BioCyc" id="MetaCyc:MONOMER-7941"/>
<dbReference type="PlantReactome" id="R-OSA-1119348">
    <property type="pathway name" value="Ent-kaurene biosynthesis"/>
</dbReference>
<dbReference type="UniPathway" id="UPA00390"/>
<dbReference type="Proteomes" id="UP000000763">
    <property type="component" value="Chromosome 2"/>
</dbReference>
<dbReference type="Proteomes" id="UP000059680">
    <property type="component" value="Chromosome 2"/>
</dbReference>
<dbReference type="GO" id="GO:0009507">
    <property type="term" value="C:chloroplast"/>
    <property type="evidence" value="ECO:0000318"/>
    <property type="project" value="GO_Central"/>
</dbReference>
<dbReference type="GO" id="GO:0009905">
    <property type="term" value="F:ent-copalyl diphosphate synthase activity"/>
    <property type="evidence" value="ECO:0007669"/>
    <property type="project" value="UniProtKB-EC"/>
</dbReference>
<dbReference type="GO" id="GO:0000287">
    <property type="term" value="F:magnesium ion binding"/>
    <property type="evidence" value="ECO:0000318"/>
    <property type="project" value="GO_Central"/>
</dbReference>
<dbReference type="GO" id="GO:0010333">
    <property type="term" value="F:terpene synthase activity"/>
    <property type="evidence" value="ECO:0000318"/>
    <property type="project" value="GO_Central"/>
</dbReference>
<dbReference type="GO" id="GO:0009686">
    <property type="term" value="P:gibberellin biosynthetic process"/>
    <property type="evidence" value="ECO:0000318"/>
    <property type="project" value="GO_Central"/>
</dbReference>
<dbReference type="GO" id="GO:0009685">
    <property type="term" value="P:gibberellin metabolic process"/>
    <property type="evidence" value="ECO:0000305"/>
    <property type="project" value="Gramene"/>
</dbReference>
<dbReference type="FunFam" id="1.10.600.10:FF:000024">
    <property type="entry name" value="Ent-copalyl diphosphate synthase"/>
    <property type="match status" value="1"/>
</dbReference>
<dbReference type="FunFam" id="1.50.10.160:FF:000001">
    <property type="entry name" value="Ent-copalyl diphosphate synthase"/>
    <property type="match status" value="1"/>
</dbReference>
<dbReference type="FunFam" id="1.50.10.130:FF:000002">
    <property type="entry name" value="Ent-copalyl diphosphate synthase, chloroplastic"/>
    <property type="match status" value="1"/>
</dbReference>
<dbReference type="Gene3D" id="1.50.10.160">
    <property type="match status" value="1"/>
</dbReference>
<dbReference type="Gene3D" id="1.10.600.10">
    <property type="entry name" value="Farnesyl Diphosphate Synthase"/>
    <property type="match status" value="1"/>
</dbReference>
<dbReference type="Gene3D" id="1.50.10.130">
    <property type="entry name" value="Terpene synthase, N-terminal domain"/>
    <property type="match status" value="1"/>
</dbReference>
<dbReference type="InterPro" id="IPR008949">
    <property type="entry name" value="Isoprenoid_synthase_dom_sf"/>
</dbReference>
<dbReference type="InterPro" id="IPR001906">
    <property type="entry name" value="Terpene_synth_N"/>
</dbReference>
<dbReference type="InterPro" id="IPR036965">
    <property type="entry name" value="Terpene_synth_N_sf"/>
</dbReference>
<dbReference type="InterPro" id="IPR050148">
    <property type="entry name" value="Terpene_synthase-like"/>
</dbReference>
<dbReference type="InterPro" id="IPR008930">
    <property type="entry name" value="Terpenoid_cyclase/PrenylTrfase"/>
</dbReference>
<dbReference type="PANTHER" id="PTHR31739:SF31">
    <property type="entry name" value="ENT-COPALYL DIPHOSPHATE SYNTHASE 1, CHLOROPLASTIC"/>
    <property type="match status" value="1"/>
</dbReference>
<dbReference type="PANTHER" id="PTHR31739">
    <property type="entry name" value="ENT-COPALYL DIPHOSPHATE SYNTHASE, CHLOROPLASTIC"/>
    <property type="match status" value="1"/>
</dbReference>
<dbReference type="Pfam" id="PF01397">
    <property type="entry name" value="Terpene_synth"/>
    <property type="match status" value="1"/>
</dbReference>
<dbReference type="SFLD" id="SFLDG01014">
    <property type="entry name" value="Terpene_Cyclase_Like_1_N-term"/>
    <property type="match status" value="1"/>
</dbReference>
<dbReference type="SUPFAM" id="SSF48239">
    <property type="entry name" value="Terpenoid cyclases/Protein prenyltransferases"/>
    <property type="match status" value="2"/>
</dbReference>
<dbReference type="SUPFAM" id="SSF48576">
    <property type="entry name" value="Terpenoid synthases"/>
    <property type="match status" value="1"/>
</dbReference>
<reference key="1">
    <citation type="journal article" date="2005" name="Nature">
        <title>The map-based sequence of the rice genome.</title>
        <authorList>
            <consortium name="International rice genome sequencing project (IRGSP)"/>
        </authorList>
    </citation>
    <scope>NUCLEOTIDE SEQUENCE [LARGE SCALE GENOMIC DNA]</scope>
    <source>
        <strain>cv. Nipponbare</strain>
    </source>
</reference>
<reference key="2">
    <citation type="journal article" date="2008" name="Nucleic Acids Res.">
        <title>The rice annotation project database (RAP-DB): 2008 update.</title>
        <authorList>
            <consortium name="The rice annotation project (RAP)"/>
        </authorList>
    </citation>
    <scope>GENOME REANNOTATION</scope>
    <source>
        <strain>cv. Nipponbare</strain>
    </source>
</reference>
<reference key="3">
    <citation type="journal article" date="2013" name="Rice">
        <title>Improvement of the Oryza sativa Nipponbare reference genome using next generation sequence and optical map data.</title>
        <authorList>
            <person name="Kawahara Y."/>
            <person name="de la Bastide M."/>
            <person name="Hamilton J.P."/>
            <person name="Kanamori H."/>
            <person name="McCombie W.R."/>
            <person name="Ouyang S."/>
            <person name="Schwartz D.C."/>
            <person name="Tanaka T."/>
            <person name="Wu J."/>
            <person name="Zhou S."/>
            <person name="Childs K.L."/>
            <person name="Davidson R.M."/>
            <person name="Lin H."/>
            <person name="Quesada-Ocampo L."/>
            <person name="Vaillancourt B."/>
            <person name="Sakai H."/>
            <person name="Lee S.S."/>
            <person name="Kim J."/>
            <person name="Numa H."/>
            <person name="Itoh T."/>
            <person name="Buell C.R."/>
            <person name="Matsumoto T."/>
        </authorList>
    </citation>
    <scope>GENOME REANNOTATION</scope>
    <source>
        <strain>cv. Nipponbare</strain>
    </source>
</reference>
<reference key="4">
    <citation type="journal article" date="2004" name="Plant J.">
        <title>Biological functions of ent- and syn-copalyl diphosphate synthases in rice: key enzymes for the branch point of gibberellin and phytoalexin biosynthesis.</title>
        <authorList>
            <person name="Ootomo K."/>
            <person name="Kenmoku H."/>
            <person name="Oikawa H."/>
            <person name="Koenig W.A."/>
            <person name="Toshima H."/>
            <person name="Mitsuhashi W."/>
            <person name="Yamane H."/>
            <person name="Sassa T."/>
            <person name="Toyomasu T."/>
        </authorList>
    </citation>
    <scope>NUCLEOTIDE SEQUENCE [MRNA] OF 95-867</scope>
    <source>
        <strain>cv. Nipponbare</strain>
    </source>
</reference>
<reference key="5">
    <citation type="journal article" date="2004" name="Biosci. Biotechnol. Biochem.">
        <title>Expression pattern of the copalyl diphosphate synthase gene in developing rice anthers.</title>
        <authorList>
            <person name="Fukuda A."/>
            <person name="Nemoto K."/>
            <person name="Chono M."/>
            <person name="Yamaguchi S."/>
            <person name="Nakajima M."/>
            <person name="Yamagishi J."/>
            <person name="Maekawa M."/>
            <person name="Yamaguchi I."/>
        </authorList>
    </citation>
    <scope>DEVELOPMENTAL STAGE</scope>
</reference>
<reference key="6">
    <citation type="journal article" date="2004" name="Plant Physiol.">
        <title>Rice contains two disparate ent-copalyl diphosphate synthases with distinct metabolic functions.</title>
        <authorList>
            <person name="Prisic S."/>
            <person name="Xu M."/>
            <person name="Wilderman P.R."/>
            <person name="Peters R.J."/>
        </authorList>
    </citation>
    <scope>FUNCTION</scope>
</reference>
<accession>Q6ET36</accession>
<accession>A0A0P0VHK1</accession>
<accession>Q68BJ4</accession>
<organism>
    <name type="scientific">Oryza sativa subsp. japonica</name>
    <name type="common">Rice</name>
    <dbReference type="NCBI Taxonomy" id="39947"/>
    <lineage>
        <taxon>Eukaryota</taxon>
        <taxon>Viridiplantae</taxon>
        <taxon>Streptophyta</taxon>
        <taxon>Embryophyta</taxon>
        <taxon>Tracheophyta</taxon>
        <taxon>Spermatophyta</taxon>
        <taxon>Magnoliopsida</taxon>
        <taxon>Liliopsida</taxon>
        <taxon>Poales</taxon>
        <taxon>Poaceae</taxon>
        <taxon>BOP clade</taxon>
        <taxon>Oryzoideae</taxon>
        <taxon>Oryzeae</taxon>
        <taxon>Oryzinae</taxon>
        <taxon>Oryza</taxon>
        <taxon>Oryza sativa</taxon>
    </lineage>
</organism>
<proteinExistence type="evidence at transcript level"/>
<protein>
    <recommendedName>
        <fullName>Ent-copalyl diphosphate synthase 1, chloroplastic</fullName>
        <shortName>Ent-CDP synthase 1</shortName>
        <shortName>OsCPS1</shortName>
        <shortName>OsCPS1ent</shortName>
        <ecNumber>5.5.1.13</ecNumber>
    </recommendedName>
    <alternativeName>
        <fullName>Ent-kaurene synthase A</fullName>
    </alternativeName>
    <alternativeName>
        <fullName>OsCPS</fullName>
    </alternativeName>
</protein>
<keyword id="KW-0150">Chloroplast</keyword>
<keyword id="KW-0413">Isomerase</keyword>
<keyword id="KW-0460">Magnesium</keyword>
<keyword id="KW-0479">Metal-binding</keyword>
<keyword id="KW-0934">Plastid</keyword>
<keyword id="KW-1185">Reference proteome</keyword>
<keyword id="KW-0809">Transit peptide</keyword>
<gene>
    <name type="primary">CPS1</name>
    <name type="ordered locus">Os02g0278700</name>
    <name type="ordered locus">LOC_Os02g17780</name>
    <name type="ORF">P0444A09.11</name>
</gene>
<feature type="transit peptide" description="Chloroplast" evidence="2">
    <location>
        <begin position="1"/>
        <end position="35"/>
    </location>
</feature>
<feature type="chain" id="PRO_0000372325" description="Ent-copalyl diphosphate synthase 1, chloroplastic">
    <location>
        <begin position="36"/>
        <end position="867"/>
    </location>
</feature>
<feature type="region of interest" description="Disordered" evidence="3">
    <location>
        <begin position="1"/>
        <end position="134"/>
    </location>
</feature>
<feature type="short sequence motif" description="DXDD motif">
    <location>
        <begin position="418"/>
        <end position="421"/>
    </location>
</feature>
<feature type="compositionally biased region" description="Basic and acidic residues" evidence="3">
    <location>
        <begin position="51"/>
        <end position="64"/>
    </location>
</feature>
<feature type="compositionally biased region" description="Low complexity" evidence="3">
    <location>
        <begin position="74"/>
        <end position="89"/>
    </location>
</feature>
<feature type="compositionally biased region" description="Basic and acidic residues" evidence="3">
    <location>
        <begin position="99"/>
        <end position="121"/>
    </location>
</feature>
<feature type="compositionally biased region" description="Acidic residues" evidence="3">
    <location>
        <begin position="124"/>
        <end position="133"/>
    </location>
</feature>
<feature type="binding site" evidence="1">
    <location>
        <position position="286"/>
    </location>
    <ligand>
        <name>substrate</name>
    </ligand>
</feature>
<feature type="binding site" evidence="1">
    <location>
        <position position="504"/>
    </location>
    <ligand>
        <name>substrate</name>
    </ligand>
</feature>
<name>CPS1_ORYSJ</name>
<evidence type="ECO:0000250" key="1">
    <source>
        <dbReference type="UniProtKB" id="Q38802"/>
    </source>
</evidence>
<evidence type="ECO:0000255" key="2"/>
<evidence type="ECO:0000256" key="3">
    <source>
        <dbReference type="SAM" id="MobiDB-lite"/>
    </source>
</evidence>
<evidence type="ECO:0000269" key="4">
    <source>
    </source>
</evidence>
<evidence type="ECO:0000269" key="5">
    <source>
    </source>
</evidence>
<evidence type="ECO:0000305" key="6"/>